<evidence type="ECO:0000255" key="1"/>
<evidence type="ECO:0000305" key="2"/>
<sequence length="222" mass="24348">MNTAIVALPPTLDPMFWIGPEGFFAAAMLPATLVIIFVETGLLFPLLPGESLLFTGGLLATKGTIDIWVLSPSVAVVAVLGDQIGYLIGRRIGPALFKKENSRFFKQHYVTESHAFFEKHGRWTIILARFLPFMRTFTPVIAGLSYMSYPLYLGFDIVGGILWGGGVTVAGYFLGNVPFVRQNLEKIILGILFVSLLPALIAAWHGYRSQSRTAKSELALPD</sequence>
<keyword id="KW-1003">Cell membrane</keyword>
<keyword id="KW-0472">Membrane</keyword>
<keyword id="KW-1185">Reference proteome</keyword>
<keyword id="KW-0812">Transmembrane</keyword>
<keyword id="KW-1133">Transmembrane helix</keyword>
<reference key="1">
    <citation type="journal article" date="2001" name="Nature">
        <title>Massive gene decay in the leprosy bacillus.</title>
        <authorList>
            <person name="Cole S.T."/>
            <person name="Eiglmeier K."/>
            <person name="Parkhill J."/>
            <person name="James K.D."/>
            <person name="Thomson N.R."/>
            <person name="Wheeler P.R."/>
            <person name="Honore N."/>
            <person name="Garnier T."/>
            <person name="Churcher C.M."/>
            <person name="Harris D.E."/>
            <person name="Mungall K.L."/>
            <person name="Basham D."/>
            <person name="Brown D."/>
            <person name="Chillingworth T."/>
            <person name="Connor R."/>
            <person name="Davies R.M."/>
            <person name="Devlin K."/>
            <person name="Duthoy S."/>
            <person name="Feltwell T."/>
            <person name="Fraser A."/>
            <person name="Hamlin N."/>
            <person name="Holroyd S."/>
            <person name="Hornsby T."/>
            <person name="Jagels K."/>
            <person name="Lacroix C."/>
            <person name="Maclean J."/>
            <person name="Moule S."/>
            <person name="Murphy L.D."/>
            <person name="Oliver K."/>
            <person name="Quail M.A."/>
            <person name="Rajandream M.A."/>
            <person name="Rutherford K.M."/>
            <person name="Rutter S."/>
            <person name="Seeger K."/>
            <person name="Simon S."/>
            <person name="Simmonds M."/>
            <person name="Skelton J."/>
            <person name="Squares R."/>
            <person name="Squares S."/>
            <person name="Stevens K."/>
            <person name="Taylor K."/>
            <person name="Whitehead S."/>
            <person name="Woodward J.R."/>
            <person name="Barrell B.G."/>
        </authorList>
    </citation>
    <scope>NUCLEOTIDE SEQUENCE [LARGE SCALE GENOMIC DNA]</scope>
    <source>
        <strain>TN</strain>
    </source>
</reference>
<name>Y287_MYCLE</name>
<comment type="subcellular location">
    <subcellularLocation>
        <location evidence="2">Cell membrane</location>
        <topology evidence="2">Multi-pass membrane protein</topology>
    </subcellularLocation>
</comment>
<comment type="similarity">
    <text evidence="2">Belongs to the DedA family.</text>
</comment>
<protein>
    <recommendedName>
        <fullName>Uncharacterized membrane protein ML0287</fullName>
    </recommendedName>
</protein>
<dbReference type="EMBL" id="AL023514">
    <property type="protein sequence ID" value="CAA18951.1"/>
    <property type="molecule type" value="Genomic_DNA"/>
</dbReference>
<dbReference type="EMBL" id="AL583918">
    <property type="protein sequence ID" value="CAC29795.1"/>
    <property type="molecule type" value="Genomic_DNA"/>
</dbReference>
<dbReference type="PIR" id="G86944">
    <property type="entry name" value="G86944"/>
</dbReference>
<dbReference type="RefSeq" id="NP_301327.1">
    <property type="nucleotide sequence ID" value="NC_002677.1"/>
</dbReference>
<dbReference type="RefSeq" id="WP_010907651.1">
    <property type="nucleotide sequence ID" value="NC_002677.1"/>
</dbReference>
<dbReference type="STRING" id="272631.gene:17574106"/>
<dbReference type="KEGG" id="mle:ML0287"/>
<dbReference type="PATRIC" id="fig|272631.5.peg.451"/>
<dbReference type="Leproma" id="ML0287"/>
<dbReference type="eggNOG" id="COG0586">
    <property type="taxonomic scope" value="Bacteria"/>
</dbReference>
<dbReference type="HOGENOM" id="CLU_044208_6_0_11"/>
<dbReference type="OrthoDB" id="9813426at2"/>
<dbReference type="Proteomes" id="UP000000806">
    <property type="component" value="Chromosome"/>
</dbReference>
<dbReference type="GO" id="GO:0005886">
    <property type="term" value="C:plasma membrane"/>
    <property type="evidence" value="ECO:0007669"/>
    <property type="project" value="UniProtKB-SubCell"/>
</dbReference>
<dbReference type="InterPro" id="IPR032818">
    <property type="entry name" value="DedA-like"/>
</dbReference>
<dbReference type="InterPro" id="IPR032816">
    <property type="entry name" value="VTT_dom"/>
</dbReference>
<dbReference type="PANTHER" id="PTHR30353">
    <property type="entry name" value="INNER MEMBRANE PROTEIN DEDA-RELATED"/>
    <property type="match status" value="1"/>
</dbReference>
<dbReference type="PANTHER" id="PTHR30353:SF0">
    <property type="entry name" value="TRANSMEMBRANE PROTEIN"/>
    <property type="match status" value="1"/>
</dbReference>
<dbReference type="Pfam" id="PF09335">
    <property type="entry name" value="VTT_dom"/>
    <property type="match status" value="1"/>
</dbReference>
<feature type="chain" id="PRO_0000161427" description="Uncharacterized membrane protein ML0287">
    <location>
        <begin position="1"/>
        <end position="222"/>
    </location>
</feature>
<feature type="transmembrane region" description="Helical" evidence="1">
    <location>
        <begin position="23"/>
        <end position="43"/>
    </location>
</feature>
<feature type="transmembrane region" description="Helical" evidence="1">
    <location>
        <begin position="67"/>
        <end position="87"/>
    </location>
</feature>
<feature type="transmembrane region" description="Helical" evidence="1">
    <location>
        <begin position="157"/>
        <end position="177"/>
    </location>
</feature>
<feature type="transmembrane region" description="Helical" evidence="1">
    <location>
        <begin position="187"/>
        <end position="207"/>
    </location>
</feature>
<gene>
    <name type="ordered locus">ML0287</name>
    <name type="ORF">MLCB4.30</name>
</gene>
<proteinExistence type="inferred from homology"/>
<organism>
    <name type="scientific">Mycobacterium leprae (strain TN)</name>
    <dbReference type="NCBI Taxonomy" id="272631"/>
    <lineage>
        <taxon>Bacteria</taxon>
        <taxon>Bacillati</taxon>
        <taxon>Actinomycetota</taxon>
        <taxon>Actinomycetes</taxon>
        <taxon>Mycobacteriales</taxon>
        <taxon>Mycobacteriaceae</taxon>
        <taxon>Mycobacterium</taxon>
    </lineage>
</organism>
<accession>O69601</accession>